<accession>P49652</accession>
<dbReference type="EMBL" id="U09842">
    <property type="protein sequence ID" value="AAA18784.1"/>
    <property type="molecule type" value="mRNA"/>
</dbReference>
<dbReference type="EMBL" id="AF012103">
    <property type="protein sequence ID" value="AAB65428.1"/>
    <property type="molecule type" value="mRNA"/>
</dbReference>
<dbReference type="RefSeq" id="NP_001290126.1">
    <property type="nucleotide sequence ID" value="NM_001303197.1"/>
</dbReference>
<dbReference type="SMR" id="P49652"/>
<dbReference type="FunCoup" id="P49652">
    <property type="interactions" value="43"/>
</dbReference>
<dbReference type="BindingDB" id="P49652"/>
<dbReference type="ChEMBL" id="CHEMBL5720"/>
<dbReference type="DrugCentral" id="P49652"/>
<dbReference type="GlyCosmos" id="P49652">
    <property type="glycosylation" value="4 sites, No reported glycans"/>
</dbReference>
<dbReference type="Ensembl" id="ENSMGAT00000017999.2">
    <property type="protein sequence ID" value="ENSMGAP00000017025.1"/>
    <property type="gene ID" value="ENSMGAG00000016075.2"/>
</dbReference>
<dbReference type="GeneID" id="100303708"/>
<dbReference type="KEGG" id="mgp:100303708"/>
<dbReference type="CTD" id="5028"/>
<dbReference type="GeneTree" id="ENSGT01030000234621"/>
<dbReference type="HOGENOM" id="CLU_009579_8_2_1"/>
<dbReference type="InParanoid" id="P49652"/>
<dbReference type="OMA" id="GFCVPFI"/>
<dbReference type="OrthoDB" id="8190652at2759"/>
<dbReference type="TreeFam" id="TF350009"/>
<dbReference type="PRO" id="PR:P49652"/>
<dbReference type="Proteomes" id="UP000001645">
    <property type="component" value="Chromosome 11"/>
</dbReference>
<dbReference type="Bgee" id="ENSMGAG00000016075">
    <property type="expression patterns" value="Expressed in brain and 17 other cell types or tissues"/>
</dbReference>
<dbReference type="GO" id="GO:0005929">
    <property type="term" value="C:cilium"/>
    <property type="evidence" value="ECO:0007669"/>
    <property type="project" value="Ensembl"/>
</dbReference>
<dbReference type="GO" id="GO:0005886">
    <property type="term" value="C:plasma membrane"/>
    <property type="evidence" value="ECO:0000250"/>
    <property type="project" value="UniProtKB"/>
</dbReference>
<dbReference type="GO" id="GO:0031686">
    <property type="term" value="F:A1 adenosine receptor binding"/>
    <property type="evidence" value="ECO:0007669"/>
    <property type="project" value="TreeGrafter"/>
</dbReference>
<dbReference type="GO" id="GO:0005524">
    <property type="term" value="F:ATP binding"/>
    <property type="evidence" value="ECO:0000250"/>
    <property type="project" value="UniProtKB"/>
</dbReference>
<dbReference type="GO" id="GO:0001621">
    <property type="term" value="F:G protein-coupled ADP receptor activity"/>
    <property type="evidence" value="ECO:0000250"/>
    <property type="project" value="UniProtKB"/>
</dbReference>
<dbReference type="GO" id="GO:0045031">
    <property type="term" value="F:G protein-coupled ATP receptor activity"/>
    <property type="evidence" value="ECO:0007669"/>
    <property type="project" value="TreeGrafter"/>
</dbReference>
<dbReference type="GO" id="GO:0071415">
    <property type="term" value="P:cellular response to purine-containing compound"/>
    <property type="evidence" value="ECO:0000250"/>
    <property type="project" value="UniProtKB"/>
</dbReference>
<dbReference type="GO" id="GO:0051649">
    <property type="term" value="P:establishment of localization in cell"/>
    <property type="evidence" value="ECO:0007669"/>
    <property type="project" value="Ensembl"/>
</dbReference>
<dbReference type="GO" id="GO:0006811">
    <property type="term" value="P:monoatomic ion transport"/>
    <property type="evidence" value="ECO:0007669"/>
    <property type="project" value="Ensembl"/>
</dbReference>
<dbReference type="GO" id="GO:0007200">
    <property type="term" value="P:phospholipase C-activating G protein-coupled receptor signaling pathway"/>
    <property type="evidence" value="ECO:0000250"/>
    <property type="project" value="UniProtKB"/>
</dbReference>
<dbReference type="GO" id="GO:0030168">
    <property type="term" value="P:platelet activation"/>
    <property type="evidence" value="ECO:0007669"/>
    <property type="project" value="InterPro"/>
</dbReference>
<dbReference type="GO" id="GO:0043270">
    <property type="term" value="P:positive regulation of monoatomic ion transport"/>
    <property type="evidence" value="ECO:0007669"/>
    <property type="project" value="Ensembl"/>
</dbReference>
<dbReference type="GO" id="GO:0008360">
    <property type="term" value="P:regulation of cell shape"/>
    <property type="evidence" value="ECO:0000250"/>
    <property type="project" value="UniProtKB"/>
</dbReference>
<dbReference type="GO" id="GO:0090075">
    <property type="term" value="P:relaxation of muscle"/>
    <property type="evidence" value="ECO:0007669"/>
    <property type="project" value="InterPro"/>
</dbReference>
<dbReference type="CDD" id="cd15377">
    <property type="entry name" value="7tmA_P2Y1"/>
    <property type="match status" value="1"/>
</dbReference>
<dbReference type="FunFam" id="1.20.1070.10:FF:000017">
    <property type="entry name" value="lysophosphatidic acid receptor 4"/>
    <property type="match status" value="1"/>
</dbReference>
<dbReference type="Gene3D" id="1.20.1070.10">
    <property type="entry name" value="Rhodopsin 7-helix transmembrane proteins"/>
    <property type="match status" value="1"/>
</dbReference>
<dbReference type="InterPro" id="IPR000276">
    <property type="entry name" value="GPCR_Rhodpsn"/>
</dbReference>
<dbReference type="InterPro" id="IPR017452">
    <property type="entry name" value="GPCR_Rhodpsn_7TM"/>
</dbReference>
<dbReference type="InterPro" id="IPR000142">
    <property type="entry name" value="P2Y1_rcpt"/>
</dbReference>
<dbReference type="PANTHER" id="PTHR24231:SF2">
    <property type="entry name" value="P2Y PURINOCEPTOR 1"/>
    <property type="match status" value="1"/>
</dbReference>
<dbReference type="PANTHER" id="PTHR24231">
    <property type="entry name" value="PURINOCEPTOR-RELATED G-PROTEIN COUPLED RECEPTOR"/>
    <property type="match status" value="1"/>
</dbReference>
<dbReference type="Pfam" id="PF00001">
    <property type="entry name" value="7tm_1"/>
    <property type="match status" value="1"/>
</dbReference>
<dbReference type="PRINTS" id="PR00237">
    <property type="entry name" value="GPCRRHODOPSN"/>
</dbReference>
<dbReference type="PRINTS" id="PR00595">
    <property type="entry name" value="P2Y1PRNOCPTR"/>
</dbReference>
<dbReference type="PRINTS" id="PR01157">
    <property type="entry name" value="P2YPURNOCPTR"/>
</dbReference>
<dbReference type="SUPFAM" id="SSF81321">
    <property type="entry name" value="Family A G protein-coupled receptor-like"/>
    <property type="match status" value="1"/>
</dbReference>
<dbReference type="PROSITE" id="PS00237">
    <property type="entry name" value="G_PROTEIN_RECEP_F1_1"/>
    <property type="match status" value="1"/>
</dbReference>
<dbReference type="PROSITE" id="PS50262">
    <property type="entry name" value="G_PROTEIN_RECEP_F1_2"/>
    <property type="match status" value="1"/>
</dbReference>
<comment type="function">
    <text evidence="2 5">Receptor for extracellular adenine nucleotides such as ADP (PubMed:8058061). In platelets, binding to ADP leads to mobilization of intracellular calcium ions via activation of phospholipase C, a change in platelet shape, and ultimately platelet aggregation (By similarity).</text>
</comment>
<comment type="subcellular location">
    <subcellularLocation>
        <location evidence="5">Cell membrane</location>
        <topology evidence="1">Multi-pass membrane protein</topology>
    </subcellularLocation>
</comment>
<comment type="tissue specificity">
    <text evidence="5">Mainly found in blood, brain, and lung. To a lesser extent in stomach, gut and skeletal muscle.</text>
</comment>
<comment type="similarity">
    <text evidence="4">Belongs to the G-protein coupled receptor 1 family.</text>
</comment>
<name>P2RY1_MELGA</name>
<evidence type="ECO:0000250" key="1">
    <source>
        <dbReference type="UniProtKB" id="P47900"/>
    </source>
</evidence>
<evidence type="ECO:0000250" key="2">
    <source>
        <dbReference type="UniProtKB" id="P49650"/>
    </source>
</evidence>
<evidence type="ECO:0000255" key="3"/>
<evidence type="ECO:0000255" key="4">
    <source>
        <dbReference type="PROSITE-ProRule" id="PRU00521"/>
    </source>
</evidence>
<evidence type="ECO:0000269" key="5">
    <source>
    </source>
</evidence>
<evidence type="ECO:0000305" key="6"/>
<feature type="chain" id="PRO_0000070010" description="P2Y purinoceptor 1">
    <location>
        <begin position="1"/>
        <end position="362"/>
    </location>
</feature>
<feature type="topological domain" description="Extracellular" evidence="6">
    <location>
        <begin position="1"/>
        <end position="40"/>
    </location>
</feature>
<feature type="transmembrane region" description="Helical; Name=1" evidence="1">
    <location>
        <begin position="41"/>
        <end position="63"/>
    </location>
</feature>
<feature type="topological domain" description="Cytoplasmic" evidence="6">
    <location>
        <begin position="64"/>
        <end position="76"/>
    </location>
</feature>
<feature type="transmembrane region" description="Helical; Name=2" evidence="1">
    <location>
        <begin position="77"/>
        <end position="98"/>
    </location>
</feature>
<feature type="topological domain" description="Extracellular" evidence="6">
    <location>
        <begin position="99"/>
        <end position="114"/>
    </location>
</feature>
<feature type="transmembrane region" description="Helical; Name=3" evidence="1">
    <location>
        <begin position="115"/>
        <end position="136"/>
    </location>
</feature>
<feature type="topological domain" description="Cytoplasmic" evidence="6">
    <location>
        <begin position="137"/>
        <end position="155"/>
    </location>
</feature>
<feature type="transmembrane region" description="Helical; Name=4" evidence="1">
    <location>
        <begin position="156"/>
        <end position="177"/>
    </location>
</feature>
<feature type="topological domain" description="Extracellular" evidence="6">
    <location>
        <begin position="178"/>
        <end position="203"/>
    </location>
</feature>
<feature type="transmembrane region" description="Helical; Name=5" evidence="1">
    <location>
        <begin position="204"/>
        <end position="226"/>
    </location>
</feature>
<feature type="topological domain" description="Cytoplasmic" evidence="6">
    <location>
        <begin position="227"/>
        <end position="249"/>
    </location>
</feature>
<feature type="transmembrane region" description="Helical; Name=6" evidence="1">
    <location>
        <begin position="250"/>
        <end position="273"/>
    </location>
</feature>
<feature type="topological domain" description="Extracellular" evidence="6">
    <location>
        <begin position="274"/>
        <end position="292"/>
    </location>
</feature>
<feature type="transmembrane region" description="Helical; Name=7" evidence="1">
    <location>
        <begin position="293"/>
        <end position="314"/>
    </location>
</feature>
<feature type="topological domain" description="Cytoplasmic" evidence="6">
    <location>
        <begin position="315"/>
        <end position="362"/>
    </location>
</feature>
<feature type="binding site" evidence="1">
    <location>
        <position position="35"/>
    </location>
    <ligand>
        <name>ADP</name>
        <dbReference type="ChEBI" id="CHEBI:456216"/>
    </ligand>
</feature>
<feature type="binding site" evidence="1">
    <location>
        <begin position="192"/>
        <end position="194"/>
    </location>
    <ligand>
        <name>ADP</name>
        <dbReference type="ChEBI" id="CHEBI:456216"/>
    </ligand>
</feature>
<feature type="binding site" evidence="1">
    <location>
        <begin position="272"/>
        <end position="276"/>
    </location>
    <ligand>
        <name>ADP</name>
        <dbReference type="ChEBI" id="CHEBI:456216"/>
    </ligand>
</feature>
<feature type="binding site" evidence="1">
    <location>
        <begin position="292"/>
        <end position="295"/>
    </location>
    <ligand>
        <name>ADP</name>
        <dbReference type="ChEBI" id="CHEBI:456216"/>
    </ligand>
</feature>
<feature type="binding site" evidence="1">
    <location>
        <position position="299"/>
    </location>
    <ligand>
        <name>ADP</name>
        <dbReference type="ChEBI" id="CHEBI:456216"/>
    </ligand>
</feature>
<feature type="glycosylation site" description="N-linked (GlcNAc...) asparagine" evidence="3">
    <location>
        <position position="11"/>
    </location>
</feature>
<feature type="glycosylation site" description="N-linked (GlcNAc...) asparagine" evidence="3">
    <location>
        <position position="26"/>
    </location>
</feature>
<feature type="glycosylation site" description="N-linked (GlcNAc...) asparagine" evidence="3">
    <location>
        <position position="102"/>
    </location>
</feature>
<feature type="glycosylation site" description="N-linked (GlcNAc...) asparagine" evidence="3">
    <location>
        <position position="186"/>
    </location>
</feature>
<feature type="disulfide bond" evidence="1">
    <location>
        <begin position="31"/>
        <end position="285"/>
    </location>
</feature>
<feature type="disulfide bond" evidence="4">
    <location>
        <begin position="113"/>
        <end position="191"/>
    </location>
</feature>
<keyword id="KW-0067">ATP-binding</keyword>
<keyword id="KW-1003">Cell membrane</keyword>
<keyword id="KW-1015">Disulfide bond</keyword>
<keyword id="KW-0297">G-protein coupled receptor</keyword>
<keyword id="KW-0325">Glycoprotein</keyword>
<keyword id="KW-0472">Membrane</keyword>
<keyword id="KW-0547">Nucleotide-binding</keyword>
<keyword id="KW-0675">Receptor</keyword>
<keyword id="KW-1185">Reference proteome</keyword>
<keyword id="KW-0807">Transducer</keyword>
<keyword id="KW-0812">Transmembrane</keyword>
<keyword id="KW-1133">Transmembrane helix</keyword>
<gene>
    <name type="primary">P2RY1</name>
</gene>
<protein>
    <recommendedName>
        <fullName>P2Y purinoceptor 1</fullName>
        <shortName>P2Y1</shortName>
    </recommendedName>
    <alternativeName>
        <fullName>6H1 orphan receptor</fullName>
    </alternativeName>
    <alternativeName>
        <fullName>ADP receptor</fullName>
    </alternativeName>
    <alternativeName>
        <fullName>Purinergic receptor</fullName>
    </alternativeName>
</protein>
<organism>
    <name type="scientific">Meleagris gallopavo</name>
    <name type="common">Wild turkey</name>
    <dbReference type="NCBI Taxonomy" id="9103"/>
    <lineage>
        <taxon>Eukaryota</taxon>
        <taxon>Metazoa</taxon>
        <taxon>Chordata</taxon>
        <taxon>Craniata</taxon>
        <taxon>Vertebrata</taxon>
        <taxon>Euteleostomi</taxon>
        <taxon>Archelosauria</taxon>
        <taxon>Archosauria</taxon>
        <taxon>Dinosauria</taxon>
        <taxon>Saurischia</taxon>
        <taxon>Theropoda</taxon>
        <taxon>Coelurosauria</taxon>
        <taxon>Aves</taxon>
        <taxon>Neognathae</taxon>
        <taxon>Galloanserae</taxon>
        <taxon>Galliformes</taxon>
        <taxon>Phasianidae</taxon>
        <taxon>Meleagridinae</taxon>
        <taxon>Meleagris</taxon>
    </lineage>
</organism>
<reference key="1">
    <citation type="journal article" date="1994" name="Mol. Pharmacol.">
        <title>Expression of a cloned P2Y purinergic receptor that couples to phospholipase C.</title>
        <authorList>
            <person name="Filtz T.M."/>
            <person name="Li Q."/>
            <person name="Boyer J.L."/>
            <person name="Nicholas R.A."/>
            <person name="Harden T.K."/>
        </authorList>
    </citation>
    <scope>NUCLEOTIDE SEQUENCE [MRNA]</scope>
    <scope>FUNCTION</scope>
    <scope>SUBCELLULAR LOCATION</scope>
    <scope>TISSUE SPECIFICITY</scope>
    <source>
        <tissue>Brain</tissue>
    </source>
</reference>
<reference key="2">
    <citation type="journal article" date="1997" name="Biochem. Biophys. Res. Commun.">
        <title>The 6H1 orphan receptor, claimed to be the p2y5 receptor, does not mediate nucleotide-promoted second messenger responses.</title>
        <authorList>
            <person name="Li Q."/>
            <person name="Schachter J.B."/>
            <person name="Harden T.K."/>
            <person name="Nicholas R.A."/>
        </authorList>
    </citation>
    <scope>NUCLEOTIDE SEQUENCE [MRNA]</scope>
</reference>
<proteinExistence type="evidence at transcript level"/>
<sequence length="362" mass="41180">MTEALISAALNGTQPELLAGGWAAGNASTKCSLTKTGFQFYYLPTVYILVFITGFLGNSVAIWMFVFHMRPWSGISVYMFNLALADFLYVLTLPALIFYYFNKTDWIFGDVMCKLQRFIFHVNLYGSILFLTCISVHRYTGVVHPLKSLGRLKKKNAVYVSSLVWALVVAVIAPILFYSGTGVRRNKTITCYDTTADEYLRSYFVYSMCTTVFMFCIPFIVILGCYGLIVKALIYKDLDNSPLRRKSIYLVIIVLTVFAVSYLPFHVMKTLNLRARLDFQTPQMCAFNDKVYATYQVTRGLASLNSCVDPILYFLAGDTFRRRLSRATRKSSRRSEPNVQSKSEEMTLNILTEYKQNGDTSL</sequence>